<dbReference type="EMBL" id="AABR03041758">
    <property type="status" value="NOT_ANNOTATED_CDS"/>
    <property type="molecule type" value="Genomic_DNA"/>
</dbReference>
<dbReference type="EMBL" id="BC085888">
    <property type="protein sequence ID" value="AAH85888.1"/>
    <property type="molecule type" value="mRNA"/>
</dbReference>
<dbReference type="RefSeq" id="NP_001014215.2">
    <molecule id="Q5U2S0-1"/>
    <property type="nucleotide sequence ID" value="NM_001014193.2"/>
</dbReference>
<dbReference type="SMR" id="Q5U2S0"/>
<dbReference type="FunCoup" id="Q5U2S0">
    <property type="interactions" value="266"/>
</dbReference>
<dbReference type="STRING" id="10116.ENSRNOP00000023289"/>
<dbReference type="GlyGen" id="Q5U2S0">
    <property type="glycosylation" value="1 site"/>
</dbReference>
<dbReference type="iPTMnet" id="Q5U2S0"/>
<dbReference type="PhosphoSitePlus" id="Q5U2S0"/>
<dbReference type="PaxDb" id="10116-ENSRNOP00000023289"/>
<dbReference type="Ensembl" id="ENSRNOT00000023289.8">
    <molecule id="Q5U2S0-1"/>
    <property type="protein sequence ID" value="ENSRNOP00000023289.5"/>
    <property type="gene ID" value="ENSRNOG00000017309.8"/>
</dbReference>
<dbReference type="Ensembl" id="ENSRNOT00000082184.2">
    <molecule id="Q5U2S0-2"/>
    <property type="protein sequence ID" value="ENSRNOP00000072995.1"/>
    <property type="gene ID" value="ENSRNOG00000017309.8"/>
</dbReference>
<dbReference type="GeneID" id="362626"/>
<dbReference type="KEGG" id="rno:362626"/>
<dbReference type="UCSC" id="RGD:1359529">
    <molecule id="Q5U2S0-1"/>
    <property type="organism name" value="rat"/>
</dbReference>
<dbReference type="AGR" id="RGD:1359529"/>
<dbReference type="CTD" id="57035"/>
<dbReference type="RGD" id="1359529">
    <property type="gene designation" value="Rsrp1"/>
</dbReference>
<dbReference type="eggNOG" id="ENOG502S6J6">
    <property type="taxonomic scope" value="Eukaryota"/>
</dbReference>
<dbReference type="GeneTree" id="ENSGT00940000174265"/>
<dbReference type="HOGENOM" id="CLU_058639_0_0_1"/>
<dbReference type="InParanoid" id="Q5U2S0"/>
<dbReference type="OMA" id="YGQWIPV"/>
<dbReference type="OrthoDB" id="92375at9989"/>
<dbReference type="TreeFam" id="TF338669"/>
<dbReference type="PRO" id="PR:Q5U2S0"/>
<dbReference type="Proteomes" id="UP000002494">
    <property type="component" value="Chromosome 5"/>
</dbReference>
<dbReference type="Bgee" id="ENSRNOG00000017309">
    <property type="expression patterns" value="Expressed in thymus and 20 other cell types or tissues"/>
</dbReference>
<dbReference type="GO" id="GO:0005634">
    <property type="term" value="C:nucleus"/>
    <property type="evidence" value="ECO:0000250"/>
    <property type="project" value="UniProtKB"/>
</dbReference>
<dbReference type="GO" id="GO:0000245">
    <property type="term" value="P:spliceosomal complex assembly"/>
    <property type="evidence" value="ECO:0000250"/>
    <property type="project" value="UniProtKB"/>
</dbReference>
<dbReference type="InterPro" id="IPR029656">
    <property type="entry name" value="RSRP1"/>
</dbReference>
<dbReference type="PANTHER" id="PTHR47622">
    <property type="entry name" value="ARGININE/SERINE-RICH PROTEIN 1"/>
    <property type="match status" value="1"/>
</dbReference>
<dbReference type="PANTHER" id="PTHR47622:SF1">
    <property type="entry name" value="ARGININE_SERINE-RICH PROTEIN 1"/>
    <property type="match status" value="1"/>
</dbReference>
<dbReference type="Pfam" id="PF17069">
    <property type="entry name" value="RSRP"/>
    <property type="match status" value="1"/>
</dbReference>
<evidence type="ECO:0000250" key="1">
    <source>
        <dbReference type="UniProtKB" id="Q3UC65"/>
    </source>
</evidence>
<evidence type="ECO:0000250" key="2">
    <source>
        <dbReference type="UniProtKB" id="Q9BUV0"/>
    </source>
</evidence>
<evidence type="ECO:0000256" key="3">
    <source>
        <dbReference type="SAM" id="MobiDB-lite"/>
    </source>
</evidence>
<evidence type="ECO:0000303" key="4">
    <source>
    </source>
</evidence>
<evidence type="ECO:0000305" key="5"/>
<evidence type="ECO:0007744" key="6">
    <source>
    </source>
</evidence>
<organism>
    <name type="scientific">Rattus norvegicus</name>
    <name type="common">Rat</name>
    <dbReference type="NCBI Taxonomy" id="10116"/>
    <lineage>
        <taxon>Eukaryota</taxon>
        <taxon>Metazoa</taxon>
        <taxon>Chordata</taxon>
        <taxon>Craniata</taxon>
        <taxon>Vertebrata</taxon>
        <taxon>Euteleostomi</taxon>
        <taxon>Mammalia</taxon>
        <taxon>Eutheria</taxon>
        <taxon>Euarchontoglires</taxon>
        <taxon>Glires</taxon>
        <taxon>Rodentia</taxon>
        <taxon>Myomorpha</taxon>
        <taxon>Muroidea</taxon>
        <taxon>Muridae</taxon>
        <taxon>Murinae</taxon>
        <taxon>Rattus</taxon>
    </lineage>
</organism>
<name>RSRP1_RAT</name>
<gene>
    <name type="primary">Rsrp1</name>
</gene>
<protein>
    <recommendedName>
        <fullName>Arginine/serine-rich protein 1</fullName>
    </recommendedName>
</protein>
<sequence>MSSAAVSKYVNDMWPGSPQEKASPSTSGSGRSSRLSSRSRSRSSSRSSRPHSRSSSRSSSRSHSRPRRSRRSRSRSRSRRRHQRKYRRYSRSYSRSRSRSRGHRYYRDSRYEQPRRYYQSPSPYRSRSRSRSRGRSHHRRSYYAITRGRRYYGFGRTVYPEDRPRWRERSRTRSRSRSRTPFRLSEKDRMELLEIAKANAAKALGTANFDLPASLRAKEASQGAVSCSGPKTEHSEKQTEVGTKNASEKSAAAQRNIAFSSNNSVAKPLEKTTKAAVEETSSGSPKIDKKKSPYGLWIPV</sequence>
<feature type="chain" id="PRO_0000297621" description="Arginine/serine-rich protein 1">
    <location>
        <begin position="1"/>
        <end position="300"/>
    </location>
</feature>
<feature type="region of interest" description="Disordered" evidence="3">
    <location>
        <begin position="1"/>
        <end position="142"/>
    </location>
</feature>
<feature type="region of interest" description="Disordered" evidence="3">
    <location>
        <begin position="222"/>
        <end position="300"/>
    </location>
</feature>
<feature type="compositionally biased region" description="Low complexity" evidence="3">
    <location>
        <begin position="23"/>
        <end position="36"/>
    </location>
</feature>
<feature type="compositionally biased region" description="Basic residues" evidence="3">
    <location>
        <begin position="37"/>
        <end position="104"/>
    </location>
</feature>
<feature type="compositionally biased region" description="Basic and acidic residues" evidence="3">
    <location>
        <begin position="105"/>
        <end position="115"/>
    </location>
</feature>
<feature type="compositionally biased region" description="Low complexity" evidence="3">
    <location>
        <begin position="116"/>
        <end position="125"/>
    </location>
</feature>
<feature type="compositionally biased region" description="Basic residues" evidence="3">
    <location>
        <begin position="126"/>
        <end position="141"/>
    </location>
</feature>
<feature type="compositionally biased region" description="Basic and acidic residues" evidence="3">
    <location>
        <begin position="268"/>
        <end position="277"/>
    </location>
</feature>
<feature type="modified residue" description="Phosphoserine" evidence="6">
    <location>
        <position position="17"/>
    </location>
</feature>
<feature type="modified residue" description="Phosphoserine" evidence="2">
    <location>
        <position position="120"/>
    </location>
</feature>
<feature type="modified residue" description="Phosphoserine" evidence="2">
    <location>
        <position position="122"/>
    </location>
</feature>
<feature type="modified residue" description="Omega-N-methylarginine" evidence="1">
    <location>
        <position position="147"/>
    </location>
</feature>
<feature type="modified residue" description="Phosphoserine" evidence="6">
    <location>
        <position position="284"/>
    </location>
</feature>
<feature type="splice variant" id="VSP_027311" description="In isoform 2." evidence="4">
    <original>HSEKQTEVGTKNASEKSAAAQRNIAFSSNNSVAKPLEKTTKAAVEETSSGSPKIDKKKSPYGLWIPV</original>
    <variation>VSPFRKLLPAVSTLCSVP</variation>
    <location>
        <begin position="234"/>
        <end position="300"/>
    </location>
</feature>
<keyword id="KW-0025">Alternative splicing</keyword>
<keyword id="KW-0488">Methylation</keyword>
<keyword id="KW-0539">Nucleus</keyword>
<keyword id="KW-0597">Phosphoprotein</keyword>
<keyword id="KW-1185">Reference proteome</keyword>
<proteinExistence type="evidence at protein level"/>
<reference key="1">
    <citation type="journal article" date="2004" name="Nature">
        <title>Genome sequence of the Brown Norway rat yields insights into mammalian evolution.</title>
        <authorList>
            <person name="Gibbs R.A."/>
            <person name="Weinstock G.M."/>
            <person name="Metzker M.L."/>
            <person name="Muzny D.M."/>
            <person name="Sodergren E.J."/>
            <person name="Scherer S."/>
            <person name="Scott G."/>
            <person name="Steffen D."/>
            <person name="Worley K.C."/>
            <person name="Burch P.E."/>
            <person name="Okwuonu G."/>
            <person name="Hines S."/>
            <person name="Lewis L."/>
            <person name="Deramo C."/>
            <person name="Delgado O."/>
            <person name="Dugan-Rocha S."/>
            <person name="Miner G."/>
            <person name="Morgan M."/>
            <person name="Hawes A."/>
            <person name="Gill R."/>
            <person name="Holt R.A."/>
            <person name="Adams M.D."/>
            <person name="Amanatides P.G."/>
            <person name="Baden-Tillson H."/>
            <person name="Barnstead M."/>
            <person name="Chin S."/>
            <person name="Evans C.A."/>
            <person name="Ferriera S."/>
            <person name="Fosler C."/>
            <person name="Glodek A."/>
            <person name="Gu Z."/>
            <person name="Jennings D."/>
            <person name="Kraft C.L."/>
            <person name="Nguyen T."/>
            <person name="Pfannkoch C.M."/>
            <person name="Sitter C."/>
            <person name="Sutton G.G."/>
            <person name="Venter J.C."/>
            <person name="Woodage T."/>
            <person name="Smith D."/>
            <person name="Lee H.-M."/>
            <person name="Gustafson E."/>
            <person name="Cahill P."/>
            <person name="Kana A."/>
            <person name="Doucette-Stamm L."/>
            <person name="Weinstock K."/>
            <person name="Fechtel K."/>
            <person name="Weiss R.B."/>
            <person name="Dunn D.M."/>
            <person name="Green E.D."/>
            <person name="Blakesley R.W."/>
            <person name="Bouffard G.G."/>
            <person name="De Jong P.J."/>
            <person name="Osoegawa K."/>
            <person name="Zhu B."/>
            <person name="Marra M."/>
            <person name="Schein J."/>
            <person name="Bosdet I."/>
            <person name="Fjell C."/>
            <person name="Jones S."/>
            <person name="Krzywinski M."/>
            <person name="Mathewson C."/>
            <person name="Siddiqui A."/>
            <person name="Wye N."/>
            <person name="McPherson J."/>
            <person name="Zhao S."/>
            <person name="Fraser C.M."/>
            <person name="Shetty J."/>
            <person name="Shatsman S."/>
            <person name="Geer K."/>
            <person name="Chen Y."/>
            <person name="Abramzon S."/>
            <person name="Nierman W.C."/>
            <person name="Havlak P.H."/>
            <person name="Chen R."/>
            <person name="Durbin K.J."/>
            <person name="Egan A."/>
            <person name="Ren Y."/>
            <person name="Song X.-Z."/>
            <person name="Li B."/>
            <person name="Liu Y."/>
            <person name="Qin X."/>
            <person name="Cawley S."/>
            <person name="Cooney A.J."/>
            <person name="D'Souza L.M."/>
            <person name="Martin K."/>
            <person name="Wu J.Q."/>
            <person name="Gonzalez-Garay M.L."/>
            <person name="Jackson A.R."/>
            <person name="Kalafus K.J."/>
            <person name="McLeod M.P."/>
            <person name="Milosavljevic A."/>
            <person name="Virk D."/>
            <person name="Volkov A."/>
            <person name="Wheeler D.A."/>
            <person name="Zhang Z."/>
            <person name="Bailey J.A."/>
            <person name="Eichler E.E."/>
            <person name="Tuzun E."/>
            <person name="Birney E."/>
            <person name="Mongin E."/>
            <person name="Ureta-Vidal A."/>
            <person name="Woodwark C."/>
            <person name="Zdobnov E."/>
            <person name="Bork P."/>
            <person name="Suyama M."/>
            <person name="Torrents D."/>
            <person name="Alexandersson M."/>
            <person name="Trask B.J."/>
            <person name="Young J.M."/>
            <person name="Huang H."/>
            <person name="Wang H."/>
            <person name="Xing H."/>
            <person name="Daniels S."/>
            <person name="Gietzen D."/>
            <person name="Schmidt J."/>
            <person name="Stevens K."/>
            <person name="Vitt U."/>
            <person name="Wingrove J."/>
            <person name="Camara F."/>
            <person name="Mar Alba M."/>
            <person name="Abril J.F."/>
            <person name="Guigo R."/>
            <person name="Smit A."/>
            <person name="Dubchak I."/>
            <person name="Rubin E.M."/>
            <person name="Couronne O."/>
            <person name="Poliakov A."/>
            <person name="Huebner N."/>
            <person name="Ganten D."/>
            <person name="Goesele C."/>
            <person name="Hummel O."/>
            <person name="Kreitler T."/>
            <person name="Lee Y.-A."/>
            <person name="Monti J."/>
            <person name="Schulz H."/>
            <person name="Zimdahl H."/>
            <person name="Himmelbauer H."/>
            <person name="Lehrach H."/>
            <person name="Jacob H.J."/>
            <person name="Bromberg S."/>
            <person name="Gullings-Handley J."/>
            <person name="Jensen-Seaman M.I."/>
            <person name="Kwitek A.E."/>
            <person name="Lazar J."/>
            <person name="Pasko D."/>
            <person name="Tonellato P.J."/>
            <person name="Twigger S."/>
            <person name="Ponting C.P."/>
            <person name="Duarte J.M."/>
            <person name="Rice S."/>
            <person name="Goodstadt L."/>
            <person name="Beatson S.A."/>
            <person name="Emes R.D."/>
            <person name="Winter E.E."/>
            <person name="Webber C."/>
            <person name="Brandt P."/>
            <person name="Nyakatura G."/>
            <person name="Adetobi M."/>
            <person name="Chiaromonte F."/>
            <person name="Elnitski L."/>
            <person name="Eswara P."/>
            <person name="Hardison R.C."/>
            <person name="Hou M."/>
            <person name="Kolbe D."/>
            <person name="Makova K."/>
            <person name="Miller W."/>
            <person name="Nekrutenko A."/>
            <person name="Riemer C."/>
            <person name="Schwartz S."/>
            <person name="Taylor J."/>
            <person name="Yang S."/>
            <person name="Zhang Y."/>
            <person name="Lindpaintner K."/>
            <person name="Andrews T.D."/>
            <person name="Caccamo M."/>
            <person name="Clamp M."/>
            <person name="Clarke L."/>
            <person name="Curwen V."/>
            <person name="Durbin R.M."/>
            <person name="Eyras E."/>
            <person name="Searle S.M."/>
            <person name="Cooper G.M."/>
            <person name="Batzoglou S."/>
            <person name="Brudno M."/>
            <person name="Sidow A."/>
            <person name="Stone E.A."/>
            <person name="Payseur B.A."/>
            <person name="Bourque G."/>
            <person name="Lopez-Otin C."/>
            <person name="Puente X.S."/>
            <person name="Chakrabarti K."/>
            <person name="Chatterji S."/>
            <person name="Dewey C."/>
            <person name="Pachter L."/>
            <person name="Bray N."/>
            <person name="Yap V.B."/>
            <person name="Caspi A."/>
            <person name="Tesler G."/>
            <person name="Pevzner P.A."/>
            <person name="Haussler D."/>
            <person name="Roskin K.M."/>
            <person name="Baertsch R."/>
            <person name="Clawson H."/>
            <person name="Furey T.S."/>
            <person name="Hinrichs A.S."/>
            <person name="Karolchik D."/>
            <person name="Kent W.J."/>
            <person name="Rosenbloom K.R."/>
            <person name="Trumbower H."/>
            <person name="Weirauch M."/>
            <person name="Cooper D.N."/>
            <person name="Stenson P.D."/>
            <person name="Ma B."/>
            <person name="Brent M."/>
            <person name="Arumugam M."/>
            <person name="Shteynberg D."/>
            <person name="Copley R.R."/>
            <person name="Taylor M.S."/>
            <person name="Riethman H."/>
            <person name="Mudunuri U."/>
            <person name="Peterson J."/>
            <person name="Guyer M."/>
            <person name="Felsenfeld A."/>
            <person name="Old S."/>
            <person name="Mockrin S."/>
            <person name="Collins F.S."/>
        </authorList>
    </citation>
    <scope>NUCLEOTIDE SEQUENCE [LARGE SCALE GENOMIC DNA]</scope>
    <source>
        <strain>Brown Norway</strain>
    </source>
</reference>
<reference key="2">
    <citation type="journal article" date="2004" name="Genome Res.">
        <title>The status, quality, and expansion of the NIH full-length cDNA project: the Mammalian Gene Collection (MGC).</title>
        <authorList>
            <consortium name="The MGC Project Team"/>
        </authorList>
    </citation>
    <scope>NUCLEOTIDE SEQUENCE [LARGE SCALE MRNA] (ISOFORM 2)</scope>
    <source>
        <tissue>Heart</tissue>
    </source>
</reference>
<reference key="3">
    <citation type="journal article" date="2012" name="Nat. Commun.">
        <title>Quantitative maps of protein phosphorylation sites across 14 different rat organs and tissues.</title>
        <authorList>
            <person name="Lundby A."/>
            <person name="Secher A."/>
            <person name="Lage K."/>
            <person name="Nordsborg N.B."/>
            <person name="Dmytriyev A."/>
            <person name="Lundby C."/>
            <person name="Olsen J.V."/>
        </authorList>
    </citation>
    <scope>PHOSPHORYLATION [LARGE SCALE ANALYSIS] AT SER-17 AND SER-284</scope>
    <scope>IDENTIFICATION BY MASS SPECTROMETRY [LARGE SCALE ANALYSIS]</scope>
</reference>
<accession>Q5U2S0</accession>
<comment type="function">
    <text evidence="2">Probably acts as a spliceosomal factor that contributes to spliceosome assembly and regulates the isoform switching of proteins such as PARP6.</text>
</comment>
<comment type="subcellular location">
    <subcellularLocation>
        <location evidence="2">Nucleus</location>
    </subcellularLocation>
</comment>
<comment type="alternative products">
    <event type="alternative splicing"/>
    <isoform>
        <id>Q5U2S0-1</id>
        <name>1</name>
        <sequence type="displayed"/>
    </isoform>
    <isoform>
        <id>Q5U2S0-2</id>
        <name>2</name>
        <sequence type="described" ref="VSP_027311"/>
    </isoform>
</comment>
<comment type="PTM">
    <text evidence="2">Phosphorylated. Phosphorylation at Ser-120 and Ser-122 mediates the interaction with spliceosome proteins.</text>
</comment>
<comment type="similarity">
    <text evidence="5">Belongs to the RSRP family.</text>
</comment>